<protein>
    <recommendedName>
        <fullName evidence="1">Holliday junction branch migration complex subunit RuvB</fullName>
        <ecNumber evidence="1">3.6.4.-</ecNumber>
    </recommendedName>
</protein>
<accession>B6JKW4</accession>
<feature type="chain" id="PRO_1000089650" description="Holliday junction branch migration complex subunit RuvB">
    <location>
        <begin position="1"/>
        <end position="336"/>
    </location>
</feature>
<feature type="region of interest" description="Large ATPase domain (RuvB-L)" evidence="1">
    <location>
        <begin position="1"/>
        <end position="182"/>
    </location>
</feature>
<feature type="region of interest" description="Small ATPAse domain (RuvB-S)" evidence="1">
    <location>
        <begin position="183"/>
        <end position="253"/>
    </location>
</feature>
<feature type="region of interest" description="Head domain (RuvB-H)" evidence="1">
    <location>
        <begin position="256"/>
        <end position="336"/>
    </location>
</feature>
<feature type="binding site" evidence="1">
    <location>
        <position position="21"/>
    </location>
    <ligand>
        <name>ATP</name>
        <dbReference type="ChEBI" id="CHEBI:30616"/>
    </ligand>
</feature>
<feature type="binding site" evidence="1">
    <location>
        <position position="22"/>
    </location>
    <ligand>
        <name>ATP</name>
        <dbReference type="ChEBI" id="CHEBI:30616"/>
    </ligand>
</feature>
<feature type="binding site" evidence="1">
    <location>
        <position position="63"/>
    </location>
    <ligand>
        <name>ATP</name>
        <dbReference type="ChEBI" id="CHEBI:30616"/>
    </ligand>
</feature>
<feature type="binding site" evidence="1">
    <location>
        <position position="66"/>
    </location>
    <ligand>
        <name>ATP</name>
        <dbReference type="ChEBI" id="CHEBI:30616"/>
    </ligand>
</feature>
<feature type="binding site" evidence="1">
    <location>
        <position position="67"/>
    </location>
    <ligand>
        <name>ATP</name>
        <dbReference type="ChEBI" id="CHEBI:30616"/>
    </ligand>
</feature>
<feature type="binding site" evidence="1">
    <location>
        <position position="67"/>
    </location>
    <ligand>
        <name>Mg(2+)</name>
        <dbReference type="ChEBI" id="CHEBI:18420"/>
    </ligand>
</feature>
<feature type="binding site" evidence="1">
    <location>
        <position position="68"/>
    </location>
    <ligand>
        <name>ATP</name>
        <dbReference type="ChEBI" id="CHEBI:30616"/>
    </ligand>
</feature>
<feature type="binding site" evidence="1">
    <location>
        <begin position="129"/>
        <end position="131"/>
    </location>
    <ligand>
        <name>ATP</name>
        <dbReference type="ChEBI" id="CHEBI:30616"/>
    </ligand>
</feature>
<feature type="binding site" evidence="1">
    <location>
        <position position="172"/>
    </location>
    <ligand>
        <name>ATP</name>
        <dbReference type="ChEBI" id="CHEBI:30616"/>
    </ligand>
</feature>
<feature type="binding site" evidence="1">
    <location>
        <position position="182"/>
    </location>
    <ligand>
        <name>ATP</name>
        <dbReference type="ChEBI" id="CHEBI:30616"/>
    </ligand>
</feature>
<feature type="binding site" evidence="1">
    <location>
        <position position="219"/>
    </location>
    <ligand>
        <name>ATP</name>
        <dbReference type="ChEBI" id="CHEBI:30616"/>
    </ligand>
</feature>
<feature type="binding site" evidence="1">
    <location>
        <position position="310"/>
    </location>
    <ligand>
        <name>DNA</name>
        <dbReference type="ChEBI" id="CHEBI:16991"/>
    </ligand>
</feature>
<feature type="binding site" evidence="1">
    <location>
        <position position="315"/>
    </location>
    <ligand>
        <name>DNA</name>
        <dbReference type="ChEBI" id="CHEBI:16991"/>
    </ligand>
</feature>
<sequence>MKERIVNLETLDFETSQEVSLRPNLWEDFIGQEKIKSNLQISICAAKKRQESLDHMLFFGPPGLGKTSISHIIAKEMETNIKITAAPMIEKSGDLAAILTNLQAKDILFIDEIHRLSPAIEEVLYPAMEDFRLDIIIGSGPAAQTIKIDLPPFTLIGATTRAGMLSNPLRDRFGMSFRMQFYSPSELSLIIKKAAVKLNQDIKEESADEIAKRSRGTPRIALRLLKRVRDFALVKNSSLMDLNITLHALNELGVNELGFDEADLAYLSLLANAQGRPVGLNTIAASMREDEGTIEDVIEPFLLANGYLERTAKGRIATPKTHALLKIPTLNPQTLF</sequence>
<evidence type="ECO:0000255" key="1">
    <source>
        <dbReference type="HAMAP-Rule" id="MF_00016"/>
    </source>
</evidence>
<comment type="function">
    <text evidence="1">The RuvA-RuvB-RuvC complex processes Holliday junction (HJ) DNA during genetic recombination and DNA repair, while the RuvA-RuvB complex plays an important role in the rescue of blocked DNA replication forks via replication fork reversal (RFR). RuvA specifically binds to HJ cruciform DNA, conferring on it an open structure. The RuvB hexamer acts as an ATP-dependent pump, pulling dsDNA into and through the RuvAB complex. RuvB forms 2 homohexamers on either side of HJ DNA bound by 1 or 2 RuvA tetramers; 4 subunits per hexamer contact DNA at a time. Coordinated motions by a converter formed by DNA-disengaged RuvB subunits stimulates ATP hydrolysis and nucleotide exchange. Immobilization of the converter enables RuvB to convert the ATP-contained energy into a lever motion, pulling 2 nucleotides of DNA out of the RuvA tetramer per ATP hydrolyzed, thus driving DNA branch migration. The RuvB motors rotate together with the DNA substrate, which together with the progressing nucleotide cycle form the mechanistic basis for DNA recombination by continuous HJ branch migration. Branch migration allows RuvC to scan DNA until it finds its consensus sequence, where it cleaves and resolves cruciform DNA.</text>
</comment>
<comment type="catalytic activity">
    <reaction evidence="1">
        <text>ATP + H2O = ADP + phosphate + H(+)</text>
        <dbReference type="Rhea" id="RHEA:13065"/>
        <dbReference type="ChEBI" id="CHEBI:15377"/>
        <dbReference type="ChEBI" id="CHEBI:15378"/>
        <dbReference type="ChEBI" id="CHEBI:30616"/>
        <dbReference type="ChEBI" id="CHEBI:43474"/>
        <dbReference type="ChEBI" id="CHEBI:456216"/>
    </reaction>
</comment>
<comment type="subunit">
    <text evidence="1">Homohexamer. Forms an RuvA(8)-RuvB(12)-Holliday junction (HJ) complex. HJ DNA is sandwiched between 2 RuvA tetramers; dsDNA enters through RuvA and exits via RuvB. An RuvB hexamer assembles on each DNA strand where it exits the tetramer. Each RuvB hexamer is contacted by two RuvA subunits (via domain III) on 2 adjacent RuvB subunits; this complex drives branch migration. In the full resolvosome a probable DNA-RuvA(4)-RuvB(12)-RuvC(2) complex forms which resolves the HJ.</text>
</comment>
<comment type="subcellular location">
    <subcellularLocation>
        <location evidence="1">Cytoplasm</location>
    </subcellularLocation>
</comment>
<comment type="domain">
    <text evidence="1">Has 3 domains, the large (RuvB-L) and small ATPase (RuvB-S) domains and the C-terminal head (RuvB-H) domain. The head domain binds DNA, while the ATPase domains jointly bind ATP, ADP or are empty depending on the state of the subunit in the translocation cycle. During a single DNA translocation step the structure of each domain remains the same, but their relative positions change.</text>
</comment>
<comment type="similarity">
    <text evidence="1">Belongs to the RuvB family.</text>
</comment>
<proteinExistence type="inferred from homology"/>
<keyword id="KW-0067">ATP-binding</keyword>
<keyword id="KW-0963">Cytoplasm</keyword>
<keyword id="KW-0227">DNA damage</keyword>
<keyword id="KW-0233">DNA recombination</keyword>
<keyword id="KW-0234">DNA repair</keyword>
<keyword id="KW-0238">DNA-binding</keyword>
<keyword id="KW-0378">Hydrolase</keyword>
<keyword id="KW-0547">Nucleotide-binding</keyword>
<name>RUVB_HELP2</name>
<gene>
    <name evidence="1" type="primary">ruvB</name>
    <name type="ordered locus">HPP12_0385</name>
</gene>
<reference key="1">
    <citation type="submission" date="2008-10" db="EMBL/GenBank/DDBJ databases">
        <title>The complete genome sequence of Helicobacter pylori strain P12.</title>
        <authorList>
            <person name="Fischer W."/>
            <person name="Windhager L."/>
            <person name="Karnholz A."/>
            <person name="Zeiller M."/>
            <person name="Zimmer R."/>
            <person name="Haas R."/>
        </authorList>
    </citation>
    <scope>NUCLEOTIDE SEQUENCE [LARGE SCALE GENOMIC DNA]</scope>
    <source>
        <strain>P12</strain>
    </source>
</reference>
<organism>
    <name type="scientific">Helicobacter pylori (strain P12)</name>
    <dbReference type="NCBI Taxonomy" id="570508"/>
    <lineage>
        <taxon>Bacteria</taxon>
        <taxon>Pseudomonadati</taxon>
        <taxon>Campylobacterota</taxon>
        <taxon>Epsilonproteobacteria</taxon>
        <taxon>Campylobacterales</taxon>
        <taxon>Helicobacteraceae</taxon>
        <taxon>Helicobacter</taxon>
    </lineage>
</organism>
<dbReference type="EC" id="3.6.4.-" evidence="1"/>
<dbReference type="EMBL" id="CP001217">
    <property type="protein sequence ID" value="ACJ07542.1"/>
    <property type="molecule type" value="Genomic_DNA"/>
</dbReference>
<dbReference type="SMR" id="B6JKW4"/>
<dbReference type="KEGG" id="hpp:HPP12_0385"/>
<dbReference type="HOGENOM" id="CLU_055599_1_0_7"/>
<dbReference type="Proteomes" id="UP000008198">
    <property type="component" value="Chromosome"/>
</dbReference>
<dbReference type="GO" id="GO:0005737">
    <property type="term" value="C:cytoplasm"/>
    <property type="evidence" value="ECO:0007669"/>
    <property type="project" value="UniProtKB-SubCell"/>
</dbReference>
<dbReference type="GO" id="GO:0048476">
    <property type="term" value="C:Holliday junction resolvase complex"/>
    <property type="evidence" value="ECO:0007669"/>
    <property type="project" value="UniProtKB-UniRule"/>
</dbReference>
<dbReference type="GO" id="GO:0005524">
    <property type="term" value="F:ATP binding"/>
    <property type="evidence" value="ECO:0007669"/>
    <property type="project" value="UniProtKB-UniRule"/>
</dbReference>
<dbReference type="GO" id="GO:0016887">
    <property type="term" value="F:ATP hydrolysis activity"/>
    <property type="evidence" value="ECO:0007669"/>
    <property type="project" value="InterPro"/>
</dbReference>
<dbReference type="GO" id="GO:0000400">
    <property type="term" value="F:four-way junction DNA binding"/>
    <property type="evidence" value="ECO:0007669"/>
    <property type="project" value="UniProtKB-UniRule"/>
</dbReference>
<dbReference type="GO" id="GO:0009378">
    <property type="term" value="F:four-way junction helicase activity"/>
    <property type="evidence" value="ECO:0007669"/>
    <property type="project" value="InterPro"/>
</dbReference>
<dbReference type="GO" id="GO:0006310">
    <property type="term" value="P:DNA recombination"/>
    <property type="evidence" value="ECO:0007669"/>
    <property type="project" value="UniProtKB-UniRule"/>
</dbReference>
<dbReference type="GO" id="GO:0006281">
    <property type="term" value="P:DNA repair"/>
    <property type="evidence" value="ECO:0007669"/>
    <property type="project" value="UniProtKB-UniRule"/>
</dbReference>
<dbReference type="CDD" id="cd00009">
    <property type="entry name" value="AAA"/>
    <property type="match status" value="1"/>
</dbReference>
<dbReference type="Gene3D" id="1.10.8.60">
    <property type="match status" value="1"/>
</dbReference>
<dbReference type="Gene3D" id="3.40.50.300">
    <property type="entry name" value="P-loop containing nucleotide triphosphate hydrolases"/>
    <property type="match status" value="1"/>
</dbReference>
<dbReference type="Gene3D" id="1.10.10.10">
    <property type="entry name" value="Winged helix-like DNA-binding domain superfamily/Winged helix DNA-binding domain"/>
    <property type="match status" value="1"/>
</dbReference>
<dbReference type="HAMAP" id="MF_00016">
    <property type="entry name" value="DNA_HJ_migration_RuvB"/>
    <property type="match status" value="1"/>
</dbReference>
<dbReference type="InterPro" id="IPR003593">
    <property type="entry name" value="AAA+_ATPase"/>
</dbReference>
<dbReference type="InterPro" id="IPR041445">
    <property type="entry name" value="AAA_lid_4"/>
</dbReference>
<dbReference type="InterPro" id="IPR004605">
    <property type="entry name" value="DNA_helicase_Holl-junc_RuvB"/>
</dbReference>
<dbReference type="InterPro" id="IPR027417">
    <property type="entry name" value="P-loop_NTPase"/>
</dbReference>
<dbReference type="InterPro" id="IPR008824">
    <property type="entry name" value="RuvB-like_N"/>
</dbReference>
<dbReference type="InterPro" id="IPR008823">
    <property type="entry name" value="RuvB_C"/>
</dbReference>
<dbReference type="InterPro" id="IPR036388">
    <property type="entry name" value="WH-like_DNA-bd_sf"/>
</dbReference>
<dbReference type="InterPro" id="IPR036390">
    <property type="entry name" value="WH_DNA-bd_sf"/>
</dbReference>
<dbReference type="NCBIfam" id="NF000868">
    <property type="entry name" value="PRK00080.1"/>
    <property type="match status" value="1"/>
</dbReference>
<dbReference type="NCBIfam" id="TIGR00635">
    <property type="entry name" value="ruvB"/>
    <property type="match status" value="1"/>
</dbReference>
<dbReference type="PANTHER" id="PTHR42848">
    <property type="match status" value="1"/>
</dbReference>
<dbReference type="PANTHER" id="PTHR42848:SF1">
    <property type="entry name" value="HOLLIDAY JUNCTION BRANCH MIGRATION COMPLEX SUBUNIT RUVB"/>
    <property type="match status" value="1"/>
</dbReference>
<dbReference type="Pfam" id="PF17864">
    <property type="entry name" value="AAA_lid_4"/>
    <property type="match status" value="1"/>
</dbReference>
<dbReference type="Pfam" id="PF05491">
    <property type="entry name" value="RuvB_C"/>
    <property type="match status" value="1"/>
</dbReference>
<dbReference type="Pfam" id="PF05496">
    <property type="entry name" value="RuvB_N"/>
    <property type="match status" value="1"/>
</dbReference>
<dbReference type="SMART" id="SM00382">
    <property type="entry name" value="AAA"/>
    <property type="match status" value="1"/>
</dbReference>
<dbReference type="SUPFAM" id="SSF52540">
    <property type="entry name" value="P-loop containing nucleoside triphosphate hydrolases"/>
    <property type="match status" value="1"/>
</dbReference>
<dbReference type="SUPFAM" id="SSF46785">
    <property type="entry name" value="Winged helix' DNA-binding domain"/>
    <property type="match status" value="1"/>
</dbReference>